<keyword id="KW-0687">Ribonucleoprotein</keyword>
<keyword id="KW-0689">Ribosomal protein</keyword>
<proteinExistence type="inferred from homology"/>
<gene>
    <name evidence="1" type="primary">rplM</name>
    <name type="ordered locus">GTNG_0137</name>
</gene>
<accession>A4IJM0</accession>
<reference key="1">
    <citation type="journal article" date="2007" name="Proc. Natl. Acad. Sci. U.S.A.">
        <title>Genome and proteome of long-chain alkane degrading Geobacillus thermodenitrificans NG80-2 isolated from a deep-subsurface oil reservoir.</title>
        <authorList>
            <person name="Feng L."/>
            <person name="Wang W."/>
            <person name="Cheng J."/>
            <person name="Ren Y."/>
            <person name="Zhao G."/>
            <person name="Gao C."/>
            <person name="Tang Y."/>
            <person name="Liu X."/>
            <person name="Han W."/>
            <person name="Peng X."/>
            <person name="Liu R."/>
            <person name="Wang L."/>
        </authorList>
    </citation>
    <scope>NUCLEOTIDE SEQUENCE [LARGE SCALE GENOMIC DNA]</scope>
    <source>
        <strain>NG80-2</strain>
    </source>
</reference>
<evidence type="ECO:0000255" key="1">
    <source>
        <dbReference type="HAMAP-Rule" id="MF_01366"/>
    </source>
</evidence>
<evidence type="ECO:0000305" key="2"/>
<dbReference type="EMBL" id="CP000557">
    <property type="protein sequence ID" value="ABO65524.1"/>
    <property type="molecule type" value="Genomic_DNA"/>
</dbReference>
<dbReference type="RefSeq" id="WP_008881912.1">
    <property type="nucleotide sequence ID" value="NC_009328.1"/>
</dbReference>
<dbReference type="SMR" id="A4IJM0"/>
<dbReference type="GeneID" id="87622293"/>
<dbReference type="KEGG" id="gtn:GTNG_0137"/>
<dbReference type="eggNOG" id="COG0102">
    <property type="taxonomic scope" value="Bacteria"/>
</dbReference>
<dbReference type="HOGENOM" id="CLU_082184_2_2_9"/>
<dbReference type="Proteomes" id="UP000001578">
    <property type="component" value="Chromosome"/>
</dbReference>
<dbReference type="GO" id="GO:0022625">
    <property type="term" value="C:cytosolic large ribosomal subunit"/>
    <property type="evidence" value="ECO:0007669"/>
    <property type="project" value="TreeGrafter"/>
</dbReference>
<dbReference type="GO" id="GO:0003729">
    <property type="term" value="F:mRNA binding"/>
    <property type="evidence" value="ECO:0007669"/>
    <property type="project" value="TreeGrafter"/>
</dbReference>
<dbReference type="GO" id="GO:0003735">
    <property type="term" value="F:structural constituent of ribosome"/>
    <property type="evidence" value="ECO:0007669"/>
    <property type="project" value="InterPro"/>
</dbReference>
<dbReference type="GO" id="GO:0017148">
    <property type="term" value="P:negative regulation of translation"/>
    <property type="evidence" value="ECO:0007669"/>
    <property type="project" value="TreeGrafter"/>
</dbReference>
<dbReference type="GO" id="GO:0006412">
    <property type="term" value="P:translation"/>
    <property type="evidence" value="ECO:0007669"/>
    <property type="project" value="UniProtKB-UniRule"/>
</dbReference>
<dbReference type="CDD" id="cd00392">
    <property type="entry name" value="Ribosomal_L13"/>
    <property type="match status" value="1"/>
</dbReference>
<dbReference type="FunFam" id="3.90.1180.10:FF:000001">
    <property type="entry name" value="50S ribosomal protein L13"/>
    <property type="match status" value="1"/>
</dbReference>
<dbReference type="Gene3D" id="3.90.1180.10">
    <property type="entry name" value="Ribosomal protein L13"/>
    <property type="match status" value="1"/>
</dbReference>
<dbReference type="HAMAP" id="MF_01366">
    <property type="entry name" value="Ribosomal_uL13"/>
    <property type="match status" value="1"/>
</dbReference>
<dbReference type="InterPro" id="IPR005822">
    <property type="entry name" value="Ribosomal_uL13"/>
</dbReference>
<dbReference type="InterPro" id="IPR005823">
    <property type="entry name" value="Ribosomal_uL13_bac-type"/>
</dbReference>
<dbReference type="InterPro" id="IPR023563">
    <property type="entry name" value="Ribosomal_uL13_CS"/>
</dbReference>
<dbReference type="InterPro" id="IPR036899">
    <property type="entry name" value="Ribosomal_uL13_sf"/>
</dbReference>
<dbReference type="NCBIfam" id="TIGR01066">
    <property type="entry name" value="rplM_bact"/>
    <property type="match status" value="1"/>
</dbReference>
<dbReference type="PANTHER" id="PTHR11545:SF2">
    <property type="entry name" value="LARGE RIBOSOMAL SUBUNIT PROTEIN UL13M"/>
    <property type="match status" value="1"/>
</dbReference>
<dbReference type="PANTHER" id="PTHR11545">
    <property type="entry name" value="RIBOSOMAL PROTEIN L13"/>
    <property type="match status" value="1"/>
</dbReference>
<dbReference type="Pfam" id="PF00572">
    <property type="entry name" value="Ribosomal_L13"/>
    <property type="match status" value="1"/>
</dbReference>
<dbReference type="PIRSF" id="PIRSF002181">
    <property type="entry name" value="Ribosomal_L13"/>
    <property type="match status" value="1"/>
</dbReference>
<dbReference type="SUPFAM" id="SSF52161">
    <property type="entry name" value="Ribosomal protein L13"/>
    <property type="match status" value="1"/>
</dbReference>
<dbReference type="PROSITE" id="PS00783">
    <property type="entry name" value="RIBOSOMAL_L13"/>
    <property type="match status" value="1"/>
</dbReference>
<comment type="function">
    <text evidence="1">This protein is one of the early assembly proteins of the 50S ribosomal subunit, although it is not seen to bind rRNA by itself. It is important during the early stages of 50S assembly.</text>
</comment>
<comment type="subunit">
    <text evidence="1">Part of the 50S ribosomal subunit.</text>
</comment>
<comment type="similarity">
    <text evidence="1">Belongs to the universal ribosomal protein uL13 family.</text>
</comment>
<feature type="chain" id="PRO_1000055386" description="Large ribosomal subunit protein uL13">
    <location>
        <begin position="1"/>
        <end position="145"/>
    </location>
</feature>
<protein>
    <recommendedName>
        <fullName evidence="1">Large ribosomal subunit protein uL13</fullName>
    </recommendedName>
    <alternativeName>
        <fullName evidence="2">50S ribosomal protein L13</fullName>
    </alternativeName>
</protein>
<name>RL13_GEOTN</name>
<sequence length="145" mass="16575">MRTTYMAKPNEVERKWYVVDAAGKTLGRLASEVAALLRGKHKPTFTPHVDCGDHVIVINADKVELTGKKLTKKLYYRHSLHPGGLKVRTALEMRTNYPEQMIERAVRGMLPKGSLGRQMFKKLHVYRGSEHPHQAQKPEVYELRG</sequence>
<organism>
    <name type="scientific">Geobacillus thermodenitrificans (strain NG80-2)</name>
    <dbReference type="NCBI Taxonomy" id="420246"/>
    <lineage>
        <taxon>Bacteria</taxon>
        <taxon>Bacillati</taxon>
        <taxon>Bacillota</taxon>
        <taxon>Bacilli</taxon>
        <taxon>Bacillales</taxon>
        <taxon>Anoxybacillaceae</taxon>
        <taxon>Geobacillus</taxon>
    </lineage>
</organism>